<comment type="function">
    <text evidence="1">Involved in the export of arginine. Important to control the intracellular level of arginine and the correct balance between arginine and lysine.</text>
</comment>
<comment type="catalytic activity">
    <reaction evidence="1">
        <text>L-arginine(in) = L-arginine(out)</text>
        <dbReference type="Rhea" id="RHEA:32143"/>
        <dbReference type="ChEBI" id="CHEBI:32682"/>
    </reaction>
    <physiologicalReaction direction="left-to-right" evidence="1">
        <dbReference type="Rhea" id="RHEA:32144"/>
    </physiologicalReaction>
</comment>
<comment type="subcellular location">
    <subcellularLocation>
        <location evidence="1">Cell inner membrane</location>
        <topology evidence="1">Multi-pass membrane protein</topology>
    </subcellularLocation>
</comment>
<comment type="similarity">
    <text evidence="1">Belongs to the LysE/ArgO transporter (TC 2.A.75) family.</text>
</comment>
<accession>B1JNR4</accession>
<evidence type="ECO:0000255" key="1">
    <source>
        <dbReference type="HAMAP-Rule" id="MF_01901"/>
    </source>
</evidence>
<dbReference type="EMBL" id="CP000950">
    <property type="protein sequence ID" value="ACA67156.1"/>
    <property type="molecule type" value="Genomic_DNA"/>
</dbReference>
<dbReference type="RefSeq" id="WP_012303656.1">
    <property type="nucleotide sequence ID" value="NZ_CP009792.1"/>
</dbReference>
<dbReference type="KEGG" id="ypy:YPK_0855"/>
<dbReference type="PATRIC" id="fig|502800.11.peg.1480"/>
<dbReference type="GO" id="GO:0005886">
    <property type="term" value="C:plasma membrane"/>
    <property type="evidence" value="ECO:0007669"/>
    <property type="project" value="UniProtKB-SubCell"/>
</dbReference>
<dbReference type="GO" id="GO:0061459">
    <property type="term" value="F:L-arginine transmembrane transporter activity"/>
    <property type="evidence" value="ECO:0007669"/>
    <property type="project" value="UniProtKB-UniRule"/>
</dbReference>
<dbReference type="HAMAP" id="MF_01901">
    <property type="entry name" value="ArgO"/>
    <property type="match status" value="1"/>
</dbReference>
<dbReference type="InterPro" id="IPR023445">
    <property type="entry name" value="Arg_export_ArgO_enterobac"/>
</dbReference>
<dbReference type="InterPro" id="IPR001123">
    <property type="entry name" value="LeuE-type"/>
</dbReference>
<dbReference type="InterPro" id="IPR004777">
    <property type="entry name" value="Lys/arg_exporter"/>
</dbReference>
<dbReference type="NCBIfam" id="TIGR00948">
    <property type="entry name" value="2a75"/>
    <property type="match status" value="1"/>
</dbReference>
<dbReference type="NCBIfam" id="NF006801">
    <property type="entry name" value="PRK09304.1"/>
    <property type="match status" value="1"/>
</dbReference>
<dbReference type="PANTHER" id="PTHR30086">
    <property type="entry name" value="ARGININE EXPORTER PROTEIN ARGO"/>
    <property type="match status" value="1"/>
</dbReference>
<dbReference type="PANTHER" id="PTHR30086:SF20">
    <property type="entry name" value="ARGININE EXPORTER PROTEIN ARGO-RELATED"/>
    <property type="match status" value="1"/>
</dbReference>
<dbReference type="Pfam" id="PF01810">
    <property type="entry name" value="LysE"/>
    <property type="match status" value="1"/>
</dbReference>
<gene>
    <name evidence="1" type="primary">argO</name>
    <name type="ordered locus">YPK_0855</name>
</gene>
<keyword id="KW-0029">Amino-acid transport</keyword>
<keyword id="KW-0997">Cell inner membrane</keyword>
<keyword id="KW-1003">Cell membrane</keyword>
<keyword id="KW-0472">Membrane</keyword>
<keyword id="KW-0812">Transmembrane</keyword>
<keyword id="KW-1133">Transmembrane helix</keyword>
<keyword id="KW-0813">Transport</keyword>
<organism>
    <name type="scientific">Yersinia pseudotuberculosis serotype O:3 (strain YPIII)</name>
    <dbReference type="NCBI Taxonomy" id="502800"/>
    <lineage>
        <taxon>Bacteria</taxon>
        <taxon>Pseudomonadati</taxon>
        <taxon>Pseudomonadota</taxon>
        <taxon>Gammaproteobacteria</taxon>
        <taxon>Enterobacterales</taxon>
        <taxon>Yersiniaceae</taxon>
        <taxon>Yersinia</taxon>
    </lineage>
</organism>
<protein>
    <recommendedName>
        <fullName evidence="1">Arginine exporter protein ArgO</fullName>
    </recommendedName>
</protein>
<reference key="1">
    <citation type="submission" date="2008-02" db="EMBL/GenBank/DDBJ databases">
        <title>Complete sequence of Yersinia pseudotuberculosis YPIII.</title>
        <authorList>
            <consortium name="US DOE Joint Genome Institute"/>
            <person name="Copeland A."/>
            <person name="Lucas S."/>
            <person name="Lapidus A."/>
            <person name="Glavina del Rio T."/>
            <person name="Dalin E."/>
            <person name="Tice H."/>
            <person name="Bruce D."/>
            <person name="Goodwin L."/>
            <person name="Pitluck S."/>
            <person name="Munk A.C."/>
            <person name="Brettin T."/>
            <person name="Detter J.C."/>
            <person name="Han C."/>
            <person name="Tapia R."/>
            <person name="Schmutz J."/>
            <person name="Larimer F."/>
            <person name="Land M."/>
            <person name="Hauser L."/>
            <person name="Challacombe J.F."/>
            <person name="Green L."/>
            <person name="Lindler L.E."/>
            <person name="Nikolich M.P."/>
            <person name="Richardson P."/>
        </authorList>
    </citation>
    <scope>NUCLEOTIDE SEQUENCE [LARGE SCALE GENOMIC DNA]</scope>
    <source>
        <strain>YPIII</strain>
    </source>
</reference>
<feature type="chain" id="PRO_1000188728" description="Arginine exporter protein ArgO">
    <location>
        <begin position="1"/>
        <end position="205"/>
    </location>
</feature>
<feature type="transmembrane region" description="Helical" evidence="1">
    <location>
        <begin position="1"/>
        <end position="21"/>
    </location>
</feature>
<feature type="transmembrane region" description="Helical" evidence="1">
    <location>
        <begin position="42"/>
        <end position="62"/>
    </location>
</feature>
<feature type="transmembrane region" description="Helical" evidence="1">
    <location>
        <begin position="67"/>
        <end position="87"/>
    </location>
</feature>
<feature type="transmembrane region" description="Helical" evidence="1">
    <location>
        <begin position="111"/>
        <end position="131"/>
    </location>
</feature>
<feature type="transmembrane region" description="Helical" evidence="1">
    <location>
        <begin position="147"/>
        <end position="167"/>
    </location>
</feature>
<feature type="transmembrane region" description="Helical" evidence="1">
    <location>
        <begin position="185"/>
        <end position="205"/>
    </location>
</feature>
<proteinExistence type="inferred from homology"/>
<sequence length="205" mass="22198">MLAVYLHGFILSAAMILPLGPQNVFVMNQGIKRQHHLMSASLCALSDIILICAGIFGGSALLSRSPLLLALVTWGGVAFLMWYGWGALMAAWRGDGVASSATSVTQGRWRILVTLLAVTWLNPHVYLDTFVVLGSLGGQLLPDIRPWFALGAVTASIVWFFALAFLAAWLSPWLNRPVAQRIINLFVGGVMGFIAFQLARQGFGL</sequence>
<name>ARGO_YERPY</name>